<organism>
    <name type="scientific">Picrophilus torridus (strain ATCC 700027 / DSM 9790 / JCM 10055 / NBRC 100828 / KAW 2/3)</name>
    <dbReference type="NCBI Taxonomy" id="1122961"/>
    <lineage>
        <taxon>Archaea</taxon>
        <taxon>Methanobacteriati</taxon>
        <taxon>Thermoplasmatota</taxon>
        <taxon>Thermoplasmata</taxon>
        <taxon>Thermoplasmatales</taxon>
        <taxon>Picrophilaceae</taxon>
        <taxon>Picrophilus</taxon>
    </lineage>
</organism>
<sequence length="271" mass="30864">MLDIIELKDNYIKFSISGITPAIANSIRRTLINDIPKLAIENVVFHHGEIRDSEGNVYDSSLPLFDEVVALRLGLIPLKTDLKMNFRDQCSCNGEGCDLCTVKYSINKLGPADVFSSDLIPINNPDLKPVDPMIPIVKLKKGQAMLVTCEAIMGRGKDHAKWQVTSGVSYKYHREFKINKNELENWSFYKDKCPKSVISENENEITFTDDVECRYLQQLFDEKSGVTITEDDTKFIFQFETDGSLTAIETLDYALKRLKERFNNLMESLSE</sequence>
<evidence type="ECO:0000255" key="1">
    <source>
        <dbReference type="HAMAP-Rule" id="MF_00320"/>
    </source>
</evidence>
<name>RPO3_PICTO</name>
<comment type="function">
    <text evidence="1">DNA-dependent RNA polymerase (RNAP) catalyzes the transcription of DNA into RNA using the four ribonucleoside triphosphates as substrates.</text>
</comment>
<comment type="catalytic activity">
    <reaction evidence="1">
        <text>RNA(n) + a ribonucleoside 5'-triphosphate = RNA(n+1) + diphosphate</text>
        <dbReference type="Rhea" id="RHEA:21248"/>
        <dbReference type="Rhea" id="RHEA-COMP:14527"/>
        <dbReference type="Rhea" id="RHEA-COMP:17342"/>
        <dbReference type="ChEBI" id="CHEBI:33019"/>
        <dbReference type="ChEBI" id="CHEBI:61557"/>
        <dbReference type="ChEBI" id="CHEBI:140395"/>
        <dbReference type="EC" id="2.7.7.6"/>
    </reaction>
</comment>
<comment type="subunit">
    <text evidence="1">Part of the RNA polymerase complex.</text>
</comment>
<comment type="subcellular location">
    <subcellularLocation>
        <location evidence="1">Cytoplasm</location>
    </subcellularLocation>
</comment>
<comment type="similarity">
    <text evidence="1">Belongs to the archaeal Rpo3/eukaryotic RPB3 RNA polymerase subunit family.</text>
</comment>
<reference key="1">
    <citation type="journal article" date="2004" name="Proc. Natl. Acad. Sci. U.S.A.">
        <title>Genome sequence of Picrophilus torridus and its implications for life around pH 0.</title>
        <authorList>
            <person name="Fuetterer O."/>
            <person name="Angelov A."/>
            <person name="Liesegang H."/>
            <person name="Gottschalk G."/>
            <person name="Schleper C."/>
            <person name="Schepers B."/>
            <person name="Dock C."/>
            <person name="Antranikian G."/>
            <person name="Liebl W."/>
        </authorList>
    </citation>
    <scope>NUCLEOTIDE SEQUENCE [LARGE SCALE GENOMIC DNA]</scope>
    <source>
        <strain>ATCC 700027 / DSM 9790 / JCM 10055 / NBRC 100828 / KAW 2/3</strain>
    </source>
</reference>
<accession>Q6KZP5</accession>
<dbReference type="EC" id="2.7.7.6" evidence="1"/>
<dbReference type="EMBL" id="AE017261">
    <property type="protein sequence ID" value="AAT43807.1"/>
    <property type="molecule type" value="Genomic_DNA"/>
</dbReference>
<dbReference type="RefSeq" id="WP_011178023.1">
    <property type="nucleotide sequence ID" value="NC_005877.1"/>
</dbReference>
<dbReference type="SMR" id="Q6KZP5"/>
<dbReference type="FunCoup" id="Q6KZP5">
    <property type="interactions" value="141"/>
</dbReference>
<dbReference type="STRING" id="263820.PTO1222"/>
<dbReference type="PaxDb" id="263820-PTO1222"/>
<dbReference type="GeneID" id="2844373"/>
<dbReference type="KEGG" id="pto:PTO1222"/>
<dbReference type="PATRIC" id="fig|263820.9.peg.1270"/>
<dbReference type="eggNOG" id="arCOG04241">
    <property type="taxonomic scope" value="Archaea"/>
</dbReference>
<dbReference type="HOGENOM" id="CLU_038421_3_1_2"/>
<dbReference type="InParanoid" id="Q6KZP5"/>
<dbReference type="OrthoDB" id="84933at2157"/>
<dbReference type="Proteomes" id="UP000000438">
    <property type="component" value="Chromosome"/>
</dbReference>
<dbReference type="GO" id="GO:0005737">
    <property type="term" value="C:cytoplasm"/>
    <property type="evidence" value="ECO:0007669"/>
    <property type="project" value="UniProtKB-SubCell"/>
</dbReference>
<dbReference type="GO" id="GO:0000428">
    <property type="term" value="C:DNA-directed RNA polymerase complex"/>
    <property type="evidence" value="ECO:0007669"/>
    <property type="project" value="UniProtKB-KW"/>
</dbReference>
<dbReference type="GO" id="GO:0003677">
    <property type="term" value="F:DNA binding"/>
    <property type="evidence" value="ECO:0007669"/>
    <property type="project" value="UniProtKB-UniRule"/>
</dbReference>
<dbReference type="GO" id="GO:0003899">
    <property type="term" value="F:DNA-directed RNA polymerase activity"/>
    <property type="evidence" value="ECO:0007669"/>
    <property type="project" value="UniProtKB-UniRule"/>
</dbReference>
<dbReference type="GO" id="GO:0046983">
    <property type="term" value="F:protein dimerization activity"/>
    <property type="evidence" value="ECO:0007669"/>
    <property type="project" value="InterPro"/>
</dbReference>
<dbReference type="GO" id="GO:0006351">
    <property type="term" value="P:DNA-templated transcription"/>
    <property type="evidence" value="ECO:0007669"/>
    <property type="project" value="UniProtKB-UniRule"/>
</dbReference>
<dbReference type="Gene3D" id="3.30.70.3110">
    <property type="match status" value="1"/>
</dbReference>
<dbReference type="Gene3D" id="2.170.120.12">
    <property type="entry name" value="DNA-directed RNA polymerase, insert domain"/>
    <property type="match status" value="1"/>
</dbReference>
<dbReference type="Gene3D" id="3.30.1360.10">
    <property type="entry name" value="RNA polymerase, RBP11-like subunit"/>
    <property type="match status" value="1"/>
</dbReference>
<dbReference type="HAMAP" id="MF_00320">
    <property type="entry name" value="RNApol_arch_Rpo3"/>
    <property type="match status" value="1"/>
</dbReference>
<dbReference type="InterPro" id="IPR011262">
    <property type="entry name" value="DNA-dir_RNA_pol_insert"/>
</dbReference>
<dbReference type="InterPro" id="IPR011263">
    <property type="entry name" value="DNA-dir_RNA_pol_RpoA/D/Rpb3"/>
</dbReference>
<dbReference type="InterPro" id="IPR036603">
    <property type="entry name" value="RBP11-like"/>
</dbReference>
<dbReference type="InterPro" id="IPR022842">
    <property type="entry name" value="RNAP_Rpo3/Rpb3/RPAC1"/>
</dbReference>
<dbReference type="InterPro" id="IPR036643">
    <property type="entry name" value="RNApol_insert_sf"/>
</dbReference>
<dbReference type="InterPro" id="IPR050518">
    <property type="entry name" value="Rpo3/RPB3_RNA_Pol_subunit"/>
</dbReference>
<dbReference type="NCBIfam" id="NF001988">
    <property type="entry name" value="PRK00783.1"/>
    <property type="match status" value="1"/>
</dbReference>
<dbReference type="PANTHER" id="PTHR11800">
    <property type="entry name" value="DNA-DIRECTED RNA POLYMERASE"/>
    <property type="match status" value="1"/>
</dbReference>
<dbReference type="PANTHER" id="PTHR11800:SF2">
    <property type="entry name" value="DNA-DIRECTED RNA POLYMERASE II SUBUNIT RPB3"/>
    <property type="match status" value="1"/>
</dbReference>
<dbReference type="Pfam" id="PF01000">
    <property type="entry name" value="RNA_pol_A_bac"/>
    <property type="match status" value="1"/>
</dbReference>
<dbReference type="Pfam" id="PF01193">
    <property type="entry name" value="RNA_pol_L"/>
    <property type="match status" value="1"/>
</dbReference>
<dbReference type="SMART" id="SM00662">
    <property type="entry name" value="RPOLD"/>
    <property type="match status" value="1"/>
</dbReference>
<dbReference type="SUPFAM" id="SSF56553">
    <property type="entry name" value="Insert subdomain of RNA polymerase alpha subunit"/>
    <property type="match status" value="1"/>
</dbReference>
<dbReference type="SUPFAM" id="SSF55257">
    <property type="entry name" value="RBP11-like subunits of RNA polymerase"/>
    <property type="match status" value="1"/>
</dbReference>
<gene>
    <name evidence="1" type="primary">rpo3</name>
    <name evidence="1" type="synonym">rpoD</name>
    <name type="ordered locus">PTO1222</name>
</gene>
<keyword id="KW-0963">Cytoplasm</keyword>
<keyword id="KW-0240">DNA-directed RNA polymerase</keyword>
<keyword id="KW-0548">Nucleotidyltransferase</keyword>
<keyword id="KW-0804">Transcription</keyword>
<keyword id="KW-0808">Transferase</keyword>
<feature type="chain" id="PRO_0000132758" description="DNA-directed RNA polymerase subunit Rpo3">
    <location>
        <begin position="1"/>
        <end position="271"/>
    </location>
</feature>
<protein>
    <recommendedName>
        <fullName evidence="1">DNA-directed RNA polymerase subunit Rpo3</fullName>
        <ecNumber evidence="1">2.7.7.6</ecNumber>
    </recommendedName>
    <alternativeName>
        <fullName evidence="1">DNA-directed RNA polymerase subunit D</fullName>
    </alternativeName>
</protein>
<proteinExistence type="inferred from homology"/>